<protein>
    <recommendedName>
        <fullName evidence="1">D-aminoacyl-tRNA deacylase</fullName>
        <shortName evidence="1">DTD</shortName>
        <ecNumber evidence="1">3.1.1.96</ecNumber>
    </recommendedName>
    <alternativeName>
        <fullName evidence="1">Gly-tRNA(Ala) deacylase</fullName>
    </alternativeName>
</protein>
<feature type="chain" id="PRO_1000211721" description="D-aminoacyl-tRNA deacylase">
    <location>
        <begin position="1"/>
        <end position="149"/>
    </location>
</feature>
<feature type="short sequence motif" description="Gly-cisPro motif, important for rejection of L-amino acids" evidence="1">
    <location>
        <begin position="137"/>
        <end position="138"/>
    </location>
</feature>
<organism>
    <name type="scientific">Clostridium botulinum (strain 657 / Type Ba4)</name>
    <dbReference type="NCBI Taxonomy" id="515621"/>
    <lineage>
        <taxon>Bacteria</taxon>
        <taxon>Bacillati</taxon>
        <taxon>Bacillota</taxon>
        <taxon>Clostridia</taxon>
        <taxon>Eubacteriales</taxon>
        <taxon>Clostridiaceae</taxon>
        <taxon>Clostridium</taxon>
    </lineage>
</organism>
<dbReference type="EC" id="3.1.1.96" evidence="1"/>
<dbReference type="EMBL" id="CP001083">
    <property type="protein sequence ID" value="ACQ52059.1"/>
    <property type="molecule type" value="Genomic_DNA"/>
</dbReference>
<dbReference type="RefSeq" id="WP_003360087.1">
    <property type="nucleotide sequence ID" value="NC_012658.1"/>
</dbReference>
<dbReference type="SMR" id="C3KTC0"/>
<dbReference type="KEGG" id="cbi:CLJ_B3323"/>
<dbReference type="HOGENOM" id="CLU_076901_1_0_9"/>
<dbReference type="Proteomes" id="UP000002333">
    <property type="component" value="Chromosome"/>
</dbReference>
<dbReference type="GO" id="GO:0005737">
    <property type="term" value="C:cytoplasm"/>
    <property type="evidence" value="ECO:0007669"/>
    <property type="project" value="UniProtKB-SubCell"/>
</dbReference>
<dbReference type="GO" id="GO:0051500">
    <property type="term" value="F:D-tyrosyl-tRNA(Tyr) deacylase activity"/>
    <property type="evidence" value="ECO:0007669"/>
    <property type="project" value="TreeGrafter"/>
</dbReference>
<dbReference type="GO" id="GO:0106026">
    <property type="term" value="F:Gly-tRNA(Ala) deacylase activity"/>
    <property type="evidence" value="ECO:0007669"/>
    <property type="project" value="UniProtKB-UniRule"/>
</dbReference>
<dbReference type="GO" id="GO:0043908">
    <property type="term" value="F:Ser(Gly)-tRNA(Ala) hydrolase activity"/>
    <property type="evidence" value="ECO:0007669"/>
    <property type="project" value="UniProtKB-UniRule"/>
</dbReference>
<dbReference type="GO" id="GO:0000049">
    <property type="term" value="F:tRNA binding"/>
    <property type="evidence" value="ECO:0007669"/>
    <property type="project" value="UniProtKB-UniRule"/>
</dbReference>
<dbReference type="GO" id="GO:0019478">
    <property type="term" value="P:D-amino acid catabolic process"/>
    <property type="evidence" value="ECO:0007669"/>
    <property type="project" value="UniProtKB-UniRule"/>
</dbReference>
<dbReference type="CDD" id="cd00563">
    <property type="entry name" value="Dtyr_deacylase"/>
    <property type="match status" value="1"/>
</dbReference>
<dbReference type="FunFam" id="3.50.80.10:FF:000001">
    <property type="entry name" value="D-aminoacyl-tRNA deacylase"/>
    <property type="match status" value="1"/>
</dbReference>
<dbReference type="Gene3D" id="3.50.80.10">
    <property type="entry name" value="D-tyrosyl-tRNA(Tyr) deacylase"/>
    <property type="match status" value="1"/>
</dbReference>
<dbReference type="HAMAP" id="MF_00518">
    <property type="entry name" value="Deacylase_Dtd"/>
    <property type="match status" value="1"/>
</dbReference>
<dbReference type="InterPro" id="IPR003732">
    <property type="entry name" value="Daa-tRNA_deacyls_DTD"/>
</dbReference>
<dbReference type="InterPro" id="IPR023509">
    <property type="entry name" value="DTD-like_sf"/>
</dbReference>
<dbReference type="NCBIfam" id="TIGR00256">
    <property type="entry name" value="D-aminoacyl-tRNA deacylase"/>
    <property type="match status" value="1"/>
</dbReference>
<dbReference type="PANTHER" id="PTHR10472:SF5">
    <property type="entry name" value="D-AMINOACYL-TRNA DEACYLASE 1"/>
    <property type="match status" value="1"/>
</dbReference>
<dbReference type="PANTHER" id="PTHR10472">
    <property type="entry name" value="D-TYROSYL-TRNA TYR DEACYLASE"/>
    <property type="match status" value="1"/>
</dbReference>
<dbReference type="Pfam" id="PF02580">
    <property type="entry name" value="Tyr_Deacylase"/>
    <property type="match status" value="1"/>
</dbReference>
<dbReference type="SUPFAM" id="SSF69500">
    <property type="entry name" value="DTD-like"/>
    <property type="match status" value="1"/>
</dbReference>
<name>DTD_CLOB6</name>
<accession>C3KTC0</accession>
<comment type="function">
    <text evidence="1">An aminoacyl-tRNA editing enzyme that deacylates mischarged D-aminoacyl-tRNAs. Also deacylates mischarged glycyl-tRNA(Ala), protecting cells against glycine mischarging by AlaRS. Acts via tRNA-based rather than protein-based catalysis; rejects L-amino acids rather than detecting D-amino acids in the active site. By recycling D-aminoacyl-tRNA to D-amino acids and free tRNA molecules, this enzyme counteracts the toxicity associated with the formation of D-aminoacyl-tRNA entities in vivo and helps enforce protein L-homochirality.</text>
</comment>
<comment type="catalytic activity">
    <reaction evidence="1">
        <text>glycyl-tRNA(Ala) + H2O = tRNA(Ala) + glycine + H(+)</text>
        <dbReference type="Rhea" id="RHEA:53744"/>
        <dbReference type="Rhea" id="RHEA-COMP:9657"/>
        <dbReference type="Rhea" id="RHEA-COMP:13640"/>
        <dbReference type="ChEBI" id="CHEBI:15377"/>
        <dbReference type="ChEBI" id="CHEBI:15378"/>
        <dbReference type="ChEBI" id="CHEBI:57305"/>
        <dbReference type="ChEBI" id="CHEBI:78442"/>
        <dbReference type="ChEBI" id="CHEBI:78522"/>
        <dbReference type="EC" id="3.1.1.96"/>
    </reaction>
</comment>
<comment type="catalytic activity">
    <reaction evidence="1">
        <text>a D-aminoacyl-tRNA + H2O = a tRNA + a D-alpha-amino acid + H(+)</text>
        <dbReference type="Rhea" id="RHEA:13953"/>
        <dbReference type="Rhea" id="RHEA-COMP:10123"/>
        <dbReference type="Rhea" id="RHEA-COMP:10124"/>
        <dbReference type="ChEBI" id="CHEBI:15377"/>
        <dbReference type="ChEBI" id="CHEBI:15378"/>
        <dbReference type="ChEBI" id="CHEBI:59871"/>
        <dbReference type="ChEBI" id="CHEBI:78442"/>
        <dbReference type="ChEBI" id="CHEBI:79333"/>
        <dbReference type="EC" id="3.1.1.96"/>
    </reaction>
</comment>
<comment type="subunit">
    <text evidence="1">Homodimer.</text>
</comment>
<comment type="subcellular location">
    <subcellularLocation>
        <location evidence="1">Cytoplasm</location>
    </subcellularLocation>
</comment>
<comment type="domain">
    <text evidence="1">A Gly-cisPro motif from one monomer fits into the active site of the other monomer to allow specific chiral rejection of L-amino acids.</text>
</comment>
<comment type="similarity">
    <text evidence="1">Belongs to the DTD family.</text>
</comment>
<sequence length="149" mass="16600">MRAVVQRVISSKVEVDGKVIGSIGKGLNVLLGISKEDTEEDIKYLKEKIINLRIFEDENEKLNKSLLDIGGDIIIVSQFTLYGDCRKGRRPSFIEALGGEEASILYNKFVESIKKEVNNVATGEFGADMKVYIENDGPVTILLDSRKTF</sequence>
<gene>
    <name evidence="1" type="primary">dtd</name>
    <name type="ordered locus">CLJ_B3323</name>
</gene>
<proteinExistence type="inferred from homology"/>
<evidence type="ECO:0000255" key="1">
    <source>
        <dbReference type="HAMAP-Rule" id="MF_00518"/>
    </source>
</evidence>
<keyword id="KW-0963">Cytoplasm</keyword>
<keyword id="KW-0378">Hydrolase</keyword>
<keyword id="KW-0694">RNA-binding</keyword>
<keyword id="KW-0820">tRNA-binding</keyword>
<reference key="1">
    <citation type="submission" date="2008-05" db="EMBL/GenBank/DDBJ databases">
        <title>Genome sequence of Clostridium botulinum Ba4 strain 657.</title>
        <authorList>
            <person name="Shrivastava S."/>
            <person name="Brown J.L."/>
            <person name="Bruce D."/>
            <person name="Detter C."/>
            <person name="Munk C."/>
            <person name="Smith L.A."/>
            <person name="Smith T.J."/>
            <person name="Sutton G."/>
            <person name="Brettin T.S."/>
        </authorList>
    </citation>
    <scope>NUCLEOTIDE SEQUENCE [LARGE SCALE GENOMIC DNA]</scope>
    <source>
        <strain>657 / Type Ba4</strain>
    </source>
</reference>